<protein>
    <recommendedName>
        <fullName>LIM domain-binding protein 3</fullName>
    </recommendedName>
    <alternativeName>
        <fullName>Protein cypher</fullName>
    </alternativeName>
    <alternativeName>
        <fullName>Z-band alternatively spliced PDZ-motif protein</fullName>
    </alternativeName>
</protein>
<dbReference type="EMBL" id="AJ133766">
    <property type="protein sequence ID" value="CAB46727.1"/>
    <property type="status" value="ALT_FRAME"/>
    <property type="molecule type" value="mRNA"/>
</dbReference>
<dbReference type="EMBL" id="AJ133767">
    <property type="protein sequence ID" value="CAB46728.1"/>
    <property type="molecule type" value="mRNA"/>
</dbReference>
<dbReference type="EMBL" id="AJ133768">
    <property type="protein sequence ID" value="CAB46729.1"/>
    <property type="molecule type" value="mRNA"/>
</dbReference>
<dbReference type="EMBL" id="AF276807">
    <property type="protein sequence ID" value="AAQ14316.1"/>
    <property type="molecule type" value="mRNA"/>
</dbReference>
<dbReference type="EMBL" id="AF276808">
    <property type="protein sequence ID" value="AAQ14317.1"/>
    <property type="status" value="ALT_FRAME"/>
    <property type="molecule type" value="mRNA"/>
</dbReference>
<dbReference type="EMBL" id="AF276809">
    <property type="protein sequence ID" value="AAQ14318.1"/>
    <property type="molecule type" value="mRNA"/>
</dbReference>
<dbReference type="EMBL" id="AB014513">
    <property type="protein sequence ID" value="BAA31588.1"/>
    <property type="status" value="ALT_INIT"/>
    <property type="molecule type" value="mRNA"/>
</dbReference>
<dbReference type="EMBL" id="AK304760">
    <property type="protein sequence ID" value="BAG65515.1"/>
    <property type="molecule type" value="mRNA"/>
</dbReference>
<dbReference type="EMBL" id="EF179181">
    <property type="protein sequence ID" value="ABN05284.1"/>
    <property type="molecule type" value="Genomic_DNA"/>
</dbReference>
<dbReference type="EMBL" id="AC067750">
    <property type="status" value="NOT_ANNOTATED_CDS"/>
    <property type="molecule type" value="Genomic_DNA"/>
</dbReference>
<dbReference type="EMBL" id="BC010929">
    <property type="protein sequence ID" value="AAH10929.1"/>
    <property type="molecule type" value="mRNA"/>
</dbReference>
<dbReference type="CCDS" id="CCDS41544.1">
    <molecule id="O75112-2"/>
</dbReference>
<dbReference type="CCDS" id="CCDS41545.1">
    <molecule id="O75112-6"/>
</dbReference>
<dbReference type="CCDS" id="CCDS44450.1">
    <molecule id="O75112-5"/>
</dbReference>
<dbReference type="CCDS" id="CCDS53549.1">
    <molecule id="O75112-4"/>
</dbReference>
<dbReference type="CCDS" id="CCDS53550.1">
    <molecule id="O75112-7"/>
</dbReference>
<dbReference type="CCDS" id="CCDS7377.1">
    <molecule id="O75112-1"/>
</dbReference>
<dbReference type="RefSeq" id="NP_001073583.1">
    <molecule id="O75112-2"/>
    <property type="nucleotide sequence ID" value="NM_001080114.2"/>
</dbReference>
<dbReference type="RefSeq" id="NP_001073584.1">
    <molecule id="O75112-5"/>
    <property type="nucleotide sequence ID" value="NM_001080115.2"/>
</dbReference>
<dbReference type="RefSeq" id="NP_001073585.1">
    <molecule id="O75112-6"/>
    <property type="nucleotide sequence ID" value="NM_001080116.1"/>
</dbReference>
<dbReference type="RefSeq" id="NP_001165081.1">
    <molecule id="O75112-7"/>
    <property type="nucleotide sequence ID" value="NM_001171610.2"/>
</dbReference>
<dbReference type="RefSeq" id="NP_001165082.1">
    <molecule id="O75112-4"/>
    <property type="nucleotide sequence ID" value="NM_001171611.2"/>
</dbReference>
<dbReference type="RefSeq" id="NP_001354992.1">
    <molecule id="O75112-5"/>
    <property type="nucleotide sequence ID" value="NM_001368063.1"/>
</dbReference>
<dbReference type="RefSeq" id="NP_001354996.1">
    <molecule id="O75112-6"/>
    <property type="nucleotide sequence ID" value="NM_001368067.1"/>
</dbReference>
<dbReference type="RefSeq" id="NP_001354997.1">
    <molecule id="O75112-6"/>
    <property type="nucleotide sequence ID" value="NM_001368068.1"/>
</dbReference>
<dbReference type="RefSeq" id="NP_009009.1">
    <molecule id="O75112-1"/>
    <property type="nucleotide sequence ID" value="NM_007078.3"/>
</dbReference>
<dbReference type="RefSeq" id="XP_005269521.1">
    <property type="nucleotide sequence ID" value="XM_005269464.4"/>
</dbReference>
<dbReference type="RefSeq" id="XP_005269525.1">
    <property type="nucleotide sequence ID" value="XM_005269468.4"/>
</dbReference>
<dbReference type="RefSeq" id="XP_011537497.1">
    <property type="nucleotide sequence ID" value="XM_011539195.2"/>
</dbReference>
<dbReference type="RefSeq" id="XP_016871097.1">
    <property type="nucleotide sequence ID" value="XM_017015608.1"/>
</dbReference>
<dbReference type="RefSeq" id="XP_016871098.1">
    <property type="nucleotide sequence ID" value="XM_017015609.1"/>
</dbReference>
<dbReference type="PDB" id="1RGW">
    <property type="method" value="NMR"/>
    <property type="chains" value="A=1-85"/>
</dbReference>
<dbReference type="PDB" id="4YDP">
    <property type="method" value="X-ray"/>
    <property type="resolution" value="1.40 A"/>
    <property type="chains" value="A/B=1-84"/>
</dbReference>
<dbReference type="PDBsum" id="1RGW"/>
<dbReference type="PDBsum" id="4YDP"/>
<dbReference type="BMRB" id="O75112"/>
<dbReference type="SMR" id="O75112"/>
<dbReference type="BioGRID" id="116326">
    <property type="interactions" value="13"/>
</dbReference>
<dbReference type="FunCoup" id="O75112">
    <property type="interactions" value="87"/>
</dbReference>
<dbReference type="IntAct" id="O75112">
    <property type="interactions" value="7"/>
</dbReference>
<dbReference type="STRING" id="9606.ENSP00000401437"/>
<dbReference type="GlyGen" id="O75112">
    <property type="glycosylation" value="3 sites, 1 O-linked glycan (1 site)"/>
</dbReference>
<dbReference type="iPTMnet" id="O75112"/>
<dbReference type="PhosphoSitePlus" id="O75112"/>
<dbReference type="SwissPalm" id="O75112"/>
<dbReference type="BioMuta" id="LDB3"/>
<dbReference type="MassIVE" id="O75112"/>
<dbReference type="PeptideAtlas" id="O75112"/>
<dbReference type="ProteomicsDB" id="49765">
    <molecule id="O75112-1"/>
</dbReference>
<dbReference type="ProteomicsDB" id="49766">
    <molecule id="O75112-2"/>
</dbReference>
<dbReference type="ProteomicsDB" id="49767">
    <molecule id="O75112-3"/>
</dbReference>
<dbReference type="ProteomicsDB" id="49768">
    <molecule id="O75112-4"/>
</dbReference>
<dbReference type="ProteomicsDB" id="49769">
    <molecule id="O75112-5"/>
</dbReference>
<dbReference type="ProteomicsDB" id="49770">
    <molecule id="O75112-6"/>
</dbReference>
<dbReference type="ProteomicsDB" id="49771">
    <molecule id="O75112-7"/>
</dbReference>
<dbReference type="Pumba" id="O75112"/>
<dbReference type="Antibodypedia" id="15974">
    <property type="antibodies" value="255 antibodies from 35 providers"/>
</dbReference>
<dbReference type="DNASU" id="11155"/>
<dbReference type="Ensembl" id="ENST00000263066.11">
    <molecule id="O75112-6"/>
    <property type="protein sequence ID" value="ENSP00000263066.7"/>
    <property type="gene ID" value="ENSG00000122367.21"/>
</dbReference>
<dbReference type="Ensembl" id="ENST00000361373.9">
    <molecule id="O75112-1"/>
    <property type="protein sequence ID" value="ENSP00000355296.3"/>
    <property type="gene ID" value="ENSG00000122367.21"/>
</dbReference>
<dbReference type="Ensembl" id="ENST00000372056.8">
    <molecule id="O75112-4"/>
    <property type="protein sequence ID" value="ENSP00000361126.4"/>
    <property type="gene ID" value="ENSG00000122367.21"/>
</dbReference>
<dbReference type="Ensembl" id="ENST00000372066.8">
    <molecule id="O75112-6"/>
    <property type="protein sequence ID" value="ENSP00000361136.3"/>
    <property type="gene ID" value="ENSG00000122367.21"/>
</dbReference>
<dbReference type="Ensembl" id="ENST00000429277.7">
    <molecule id="O75112-2"/>
    <property type="protein sequence ID" value="ENSP00000401437.3"/>
    <property type="gene ID" value="ENSG00000122367.21"/>
</dbReference>
<dbReference type="Ensembl" id="ENST00000623007.3">
    <molecule id="O75112-5"/>
    <property type="protein sequence ID" value="ENSP00000485389.1"/>
    <property type="gene ID" value="ENSG00000122367.21"/>
</dbReference>
<dbReference type="Ensembl" id="ENST00000623056.4">
    <molecule id="O75112-7"/>
    <property type="protein sequence ID" value="ENSP00000485500.1"/>
    <property type="gene ID" value="ENSG00000122367.21"/>
</dbReference>
<dbReference type="GeneID" id="11155"/>
<dbReference type="KEGG" id="hsa:11155"/>
<dbReference type="MANE-Select" id="ENST00000361373.9">
    <property type="protein sequence ID" value="ENSP00000355296.3"/>
    <property type="RefSeq nucleotide sequence ID" value="NM_007078.3"/>
    <property type="RefSeq protein sequence ID" value="NP_009009.1"/>
</dbReference>
<dbReference type="UCSC" id="uc001kdr.4">
    <molecule id="O75112-1"/>
    <property type="organism name" value="human"/>
</dbReference>
<dbReference type="AGR" id="HGNC:15710"/>
<dbReference type="CTD" id="11155"/>
<dbReference type="DisGeNET" id="11155"/>
<dbReference type="GeneCards" id="LDB3"/>
<dbReference type="GeneReviews" id="LDB3"/>
<dbReference type="HGNC" id="HGNC:15710">
    <property type="gene designation" value="LDB3"/>
</dbReference>
<dbReference type="HPA" id="ENSG00000122367">
    <property type="expression patterns" value="Group enriched (heart muscle, skeletal muscle, tongue)"/>
</dbReference>
<dbReference type="MalaCards" id="LDB3"/>
<dbReference type="MIM" id="601493">
    <property type="type" value="phenotype"/>
</dbReference>
<dbReference type="MIM" id="605906">
    <property type="type" value="gene"/>
</dbReference>
<dbReference type="MIM" id="609452">
    <property type="type" value="phenotype"/>
</dbReference>
<dbReference type="neXtProt" id="NX_O75112"/>
<dbReference type="OpenTargets" id="ENSG00000122367"/>
<dbReference type="Orphanet" id="154">
    <property type="disease" value="Familial isolated dilated cardiomyopathy"/>
</dbReference>
<dbReference type="Orphanet" id="293888">
    <property type="disease" value="Inherited isolated arrhythmogenic cardiomyopathy, dominant-left variant"/>
</dbReference>
<dbReference type="Orphanet" id="293910">
    <property type="disease" value="Inherited isolated arrhythmogenic cardiomyopathy, dominant-right variant"/>
</dbReference>
<dbReference type="Orphanet" id="293899">
    <property type="disease" value="Inherited isolated arrhythmogenic ventricular dysplasia, biventricular variant"/>
</dbReference>
<dbReference type="Orphanet" id="98912">
    <property type="disease" value="Late-onset distal myopathy, Markesbery-Griggs type"/>
</dbReference>
<dbReference type="Orphanet" id="54260">
    <property type="disease" value="Left ventricular noncompaction"/>
</dbReference>
<dbReference type="PharmGKB" id="PA30318"/>
<dbReference type="VEuPathDB" id="HostDB:ENSG00000122367"/>
<dbReference type="GeneTree" id="ENSGT00940000154877"/>
<dbReference type="HOGENOM" id="CLU_038114_0_1_1"/>
<dbReference type="InParanoid" id="O75112"/>
<dbReference type="OMA" id="ERGPMNT"/>
<dbReference type="OrthoDB" id="44841at2759"/>
<dbReference type="PAN-GO" id="O75112">
    <property type="GO annotations" value="9 GO annotations based on evolutionary models"/>
</dbReference>
<dbReference type="PhylomeDB" id="O75112"/>
<dbReference type="TreeFam" id="TF106408"/>
<dbReference type="PathwayCommons" id="O75112"/>
<dbReference type="SignaLink" id="O75112"/>
<dbReference type="BioGRID-ORCS" id="11155">
    <property type="hits" value="15 hits in 1144 CRISPR screens"/>
</dbReference>
<dbReference type="ChiTaRS" id="LDB3">
    <property type="organism name" value="human"/>
</dbReference>
<dbReference type="EvolutionaryTrace" id="O75112"/>
<dbReference type="GeneWiki" id="LDB3"/>
<dbReference type="GenomeRNAi" id="11155"/>
<dbReference type="Pharos" id="O75112">
    <property type="development level" value="Tbio"/>
</dbReference>
<dbReference type="PRO" id="PR:O75112"/>
<dbReference type="Proteomes" id="UP000005640">
    <property type="component" value="Chromosome 10"/>
</dbReference>
<dbReference type="RNAct" id="O75112">
    <property type="molecule type" value="protein"/>
</dbReference>
<dbReference type="Bgee" id="ENSG00000122367">
    <property type="expression patterns" value="Expressed in skeletal muscle tissue of biceps brachii and 182 other cell types or tissues"/>
</dbReference>
<dbReference type="ExpressionAtlas" id="O75112">
    <property type="expression patterns" value="baseline and differential"/>
</dbReference>
<dbReference type="GO" id="GO:0005912">
    <property type="term" value="C:adherens junction"/>
    <property type="evidence" value="ECO:0000318"/>
    <property type="project" value="GO_Central"/>
</dbReference>
<dbReference type="GO" id="GO:0005856">
    <property type="term" value="C:cytoskeleton"/>
    <property type="evidence" value="ECO:0000314"/>
    <property type="project" value="UniProtKB"/>
</dbReference>
<dbReference type="GO" id="GO:0031941">
    <property type="term" value="C:filamentous actin"/>
    <property type="evidence" value="ECO:0000318"/>
    <property type="project" value="GO_Central"/>
</dbReference>
<dbReference type="GO" id="GO:0048471">
    <property type="term" value="C:perinuclear region of cytoplasm"/>
    <property type="evidence" value="ECO:0007669"/>
    <property type="project" value="UniProtKB-SubCell"/>
</dbReference>
<dbReference type="GO" id="GO:0031143">
    <property type="term" value="C:pseudopodium"/>
    <property type="evidence" value="ECO:0007669"/>
    <property type="project" value="UniProtKB-SubCell"/>
</dbReference>
<dbReference type="GO" id="GO:0001725">
    <property type="term" value="C:stress fiber"/>
    <property type="evidence" value="ECO:0000318"/>
    <property type="project" value="GO_Central"/>
</dbReference>
<dbReference type="GO" id="GO:0030018">
    <property type="term" value="C:Z disc"/>
    <property type="evidence" value="ECO:0000314"/>
    <property type="project" value="MGI"/>
</dbReference>
<dbReference type="GO" id="GO:0003779">
    <property type="term" value="F:actin binding"/>
    <property type="evidence" value="ECO:0000318"/>
    <property type="project" value="GO_Central"/>
</dbReference>
<dbReference type="GO" id="GO:0008092">
    <property type="term" value="F:cytoskeletal protein binding"/>
    <property type="evidence" value="ECO:0000353"/>
    <property type="project" value="UniProtKB"/>
</dbReference>
<dbReference type="GO" id="GO:0046872">
    <property type="term" value="F:metal ion binding"/>
    <property type="evidence" value="ECO:0007669"/>
    <property type="project" value="UniProtKB-KW"/>
</dbReference>
<dbReference type="GO" id="GO:0051371">
    <property type="term" value="F:muscle alpha-actinin binding"/>
    <property type="evidence" value="ECO:0000318"/>
    <property type="project" value="GO_Central"/>
</dbReference>
<dbReference type="GO" id="GO:0005080">
    <property type="term" value="F:protein kinase C binding"/>
    <property type="evidence" value="ECO:0007669"/>
    <property type="project" value="Ensembl"/>
</dbReference>
<dbReference type="GO" id="GO:0030036">
    <property type="term" value="P:actin cytoskeleton organization"/>
    <property type="evidence" value="ECO:0000318"/>
    <property type="project" value="GO_Central"/>
</dbReference>
<dbReference type="GO" id="GO:0007507">
    <property type="term" value="P:heart development"/>
    <property type="evidence" value="ECO:0000318"/>
    <property type="project" value="GO_Central"/>
</dbReference>
<dbReference type="GO" id="GO:0061061">
    <property type="term" value="P:muscle structure development"/>
    <property type="evidence" value="ECO:0000318"/>
    <property type="project" value="GO_Central"/>
</dbReference>
<dbReference type="GO" id="GO:0045214">
    <property type="term" value="P:sarcomere organization"/>
    <property type="evidence" value="ECO:0007669"/>
    <property type="project" value="Ensembl"/>
</dbReference>
<dbReference type="CDD" id="cd09454">
    <property type="entry name" value="LIM1_ZASP_Cypher"/>
    <property type="match status" value="1"/>
</dbReference>
<dbReference type="CDD" id="cd09362">
    <property type="entry name" value="LIM2_Enigma_like"/>
    <property type="match status" value="1"/>
</dbReference>
<dbReference type="CDD" id="cd09363">
    <property type="entry name" value="LIM3_Enigma_like"/>
    <property type="match status" value="1"/>
</dbReference>
<dbReference type="CDD" id="cd06753">
    <property type="entry name" value="PDZ_PDLIM-like"/>
    <property type="match status" value="1"/>
</dbReference>
<dbReference type="DisProt" id="DP01781">
    <molecule id="O75112-6"/>
</dbReference>
<dbReference type="FunFam" id="2.30.42.10:FF:000019">
    <property type="entry name" value="LIM domain binding 3 isoform 1"/>
    <property type="match status" value="1"/>
</dbReference>
<dbReference type="FunFam" id="2.10.110.10:FF:000010">
    <property type="entry name" value="PDZ and LIM domain protein 5"/>
    <property type="match status" value="1"/>
</dbReference>
<dbReference type="FunFam" id="2.10.110.10:FF:000014">
    <property type="entry name" value="PDZ and LIM domain protein 5"/>
    <property type="match status" value="1"/>
</dbReference>
<dbReference type="FunFam" id="2.10.110.10:FF:000020">
    <property type="entry name" value="PDZ and LIM domain protein 5"/>
    <property type="match status" value="1"/>
</dbReference>
<dbReference type="Gene3D" id="2.30.42.10">
    <property type="match status" value="1"/>
</dbReference>
<dbReference type="Gene3D" id="2.10.110.10">
    <property type="entry name" value="Cysteine Rich Protein"/>
    <property type="match status" value="3"/>
</dbReference>
<dbReference type="InterPro" id="IPR031847">
    <property type="entry name" value="PDLI1-4/Zasp-like_mid"/>
</dbReference>
<dbReference type="InterPro" id="IPR001478">
    <property type="entry name" value="PDZ"/>
</dbReference>
<dbReference type="InterPro" id="IPR050604">
    <property type="entry name" value="PDZ-LIM_domain"/>
</dbReference>
<dbReference type="InterPro" id="IPR036034">
    <property type="entry name" value="PDZ_sf"/>
</dbReference>
<dbReference type="InterPro" id="IPR006643">
    <property type="entry name" value="Zasp-like_motif"/>
</dbReference>
<dbReference type="InterPro" id="IPR001781">
    <property type="entry name" value="Znf_LIM"/>
</dbReference>
<dbReference type="PANTHER" id="PTHR24214:SF9">
    <property type="entry name" value="LIM DOMAIN-BINDING PROTEIN 3"/>
    <property type="match status" value="1"/>
</dbReference>
<dbReference type="PANTHER" id="PTHR24214">
    <property type="entry name" value="PDZ AND LIM DOMAIN PROTEIN ZASP"/>
    <property type="match status" value="1"/>
</dbReference>
<dbReference type="Pfam" id="PF15936">
    <property type="entry name" value="DUF4749"/>
    <property type="match status" value="1"/>
</dbReference>
<dbReference type="Pfam" id="PF00412">
    <property type="entry name" value="LIM"/>
    <property type="match status" value="3"/>
</dbReference>
<dbReference type="Pfam" id="PF00595">
    <property type="entry name" value="PDZ"/>
    <property type="match status" value="1"/>
</dbReference>
<dbReference type="PRINTS" id="PR01217">
    <property type="entry name" value="PRICHEXTENSN"/>
</dbReference>
<dbReference type="SMART" id="SM00132">
    <property type="entry name" value="LIM"/>
    <property type="match status" value="3"/>
</dbReference>
<dbReference type="SMART" id="SM00228">
    <property type="entry name" value="PDZ"/>
    <property type="match status" value="1"/>
</dbReference>
<dbReference type="SMART" id="SM00735">
    <property type="entry name" value="ZM"/>
    <property type="match status" value="1"/>
</dbReference>
<dbReference type="SUPFAM" id="SSF57716">
    <property type="entry name" value="Glucocorticoid receptor-like (DNA-binding domain)"/>
    <property type="match status" value="4"/>
</dbReference>
<dbReference type="SUPFAM" id="SSF50156">
    <property type="entry name" value="PDZ domain-like"/>
    <property type="match status" value="1"/>
</dbReference>
<dbReference type="PROSITE" id="PS00478">
    <property type="entry name" value="LIM_DOMAIN_1"/>
    <property type="match status" value="2"/>
</dbReference>
<dbReference type="PROSITE" id="PS50023">
    <property type="entry name" value="LIM_DOMAIN_2"/>
    <property type="match status" value="3"/>
</dbReference>
<dbReference type="PROSITE" id="PS50106">
    <property type="entry name" value="PDZ"/>
    <property type="match status" value="1"/>
</dbReference>
<reference evidence="14 18" key="1">
    <citation type="journal article" date="1999" name="J. Cell Biol.">
        <title>ZASP: a new Z-band alternatively spliced PDZ-motif protein.</title>
        <authorList>
            <person name="Faulkner G."/>
            <person name="Pallavicini A."/>
            <person name="Formentin E."/>
            <person name="Comelli A."/>
            <person name="Ievolella C."/>
            <person name="Trevisan S."/>
            <person name="Bortoletto G."/>
            <person name="Scannapieco P."/>
            <person name="Salamon M."/>
            <person name="Mouly V."/>
            <person name="Valle G."/>
            <person name="Lanfranchi G."/>
        </authorList>
    </citation>
    <scope>NUCLEOTIDE SEQUENCE [MRNA] (ISOFORMS 2; 3 AND 6)</scope>
    <scope>INTERACTION WITH ACTN2</scope>
    <scope>SUBCELLULAR LOCATION</scope>
    <scope>TISSUE SPECIFICITY</scope>
</reference>
<reference evidence="14 16" key="2">
    <citation type="submission" date="2003-01" db="EMBL/GenBank/DDBJ databases">
        <title>ZASP: a new Z-band alternatively spliced PDZ-motif protein identified from a melanoma tumor line.</title>
        <authorList>
            <person name="Zeng G."/>
            <person name="Rosenberg S.A."/>
            <person name="Wang R.-F."/>
        </authorList>
    </citation>
    <scope>NUCLEOTIDE SEQUENCE [MRNA] (ISOFORMS 4; 5 AND 6)</scope>
    <source>
        <tissue>Melanoma</tissue>
        <tissue>Skeletal muscle</tissue>
        <tissue>Uterus</tissue>
    </source>
</reference>
<reference evidence="14 17" key="3">
    <citation type="journal article" date="1998" name="DNA Res.">
        <title>Prediction of the coding sequences of unidentified human genes. X. The complete sequences of 100 new cDNA clones from brain which can code for large proteins in vitro.</title>
        <authorList>
            <person name="Ishikawa K."/>
            <person name="Nagase T."/>
            <person name="Suyama M."/>
            <person name="Miyajima N."/>
            <person name="Tanaka A."/>
            <person name="Kotani H."/>
            <person name="Nomura N."/>
            <person name="Ohara O."/>
        </authorList>
    </citation>
    <scope>NUCLEOTIDE SEQUENCE [LARGE SCALE MRNA] (ISOFORM 1)</scope>
    <source>
        <tissue evidence="17">Brain</tissue>
    </source>
</reference>
<reference key="4">
    <citation type="journal article" date="2004" name="Nat. Genet.">
        <title>Complete sequencing and characterization of 21,243 full-length human cDNAs.</title>
        <authorList>
            <person name="Ota T."/>
            <person name="Suzuki Y."/>
            <person name="Nishikawa T."/>
            <person name="Otsuki T."/>
            <person name="Sugiyama T."/>
            <person name="Irie R."/>
            <person name="Wakamatsu A."/>
            <person name="Hayashi K."/>
            <person name="Sato H."/>
            <person name="Nagai K."/>
            <person name="Kimura K."/>
            <person name="Makita H."/>
            <person name="Sekine M."/>
            <person name="Obayashi M."/>
            <person name="Nishi T."/>
            <person name="Shibahara T."/>
            <person name="Tanaka T."/>
            <person name="Ishii S."/>
            <person name="Yamamoto J."/>
            <person name="Saito K."/>
            <person name="Kawai Y."/>
            <person name="Isono Y."/>
            <person name="Nakamura Y."/>
            <person name="Nagahari K."/>
            <person name="Murakami K."/>
            <person name="Yasuda T."/>
            <person name="Iwayanagi T."/>
            <person name="Wagatsuma M."/>
            <person name="Shiratori A."/>
            <person name="Sudo H."/>
            <person name="Hosoiri T."/>
            <person name="Kaku Y."/>
            <person name="Kodaira H."/>
            <person name="Kondo H."/>
            <person name="Sugawara M."/>
            <person name="Takahashi M."/>
            <person name="Kanda K."/>
            <person name="Yokoi T."/>
            <person name="Furuya T."/>
            <person name="Kikkawa E."/>
            <person name="Omura Y."/>
            <person name="Abe K."/>
            <person name="Kamihara K."/>
            <person name="Katsuta N."/>
            <person name="Sato K."/>
            <person name="Tanikawa M."/>
            <person name="Yamazaki M."/>
            <person name="Ninomiya K."/>
            <person name="Ishibashi T."/>
            <person name="Yamashita H."/>
            <person name="Murakawa K."/>
            <person name="Fujimori K."/>
            <person name="Tanai H."/>
            <person name="Kimata M."/>
            <person name="Watanabe M."/>
            <person name="Hiraoka S."/>
            <person name="Chiba Y."/>
            <person name="Ishida S."/>
            <person name="Ono Y."/>
            <person name="Takiguchi S."/>
            <person name="Watanabe S."/>
            <person name="Yosida M."/>
            <person name="Hotuta T."/>
            <person name="Kusano J."/>
            <person name="Kanehori K."/>
            <person name="Takahashi-Fujii A."/>
            <person name="Hara H."/>
            <person name="Tanase T.-O."/>
            <person name="Nomura Y."/>
            <person name="Togiya S."/>
            <person name="Komai F."/>
            <person name="Hara R."/>
            <person name="Takeuchi K."/>
            <person name="Arita M."/>
            <person name="Imose N."/>
            <person name="Musashino K."/>
            <person name="Yuuki H."/>
            <person name="Oshima A."/>
            <person name="Sasaki N."/>
            <person name="Aotsuka S."/>
            <person name="Yoshikawa Y."/>
            <person name="Matsunawa H."/>
            <person name="Ichihara T."/>
            <person name="Shiohata N."/>
            <person name="Sano S."/>
            <person name="Moriya S."/>
            <person name="Momiyama H."/>
            <person name="Satoh N."/>
            <person name="Takami S."/>
            <person name="Terashima Y."/>
            <person name="Suzuki O."/>
            <person name="Nakagawa S."/>
            <person name="Senoh A."/>
            <person name="Mizoguchi H."/>
            <person name="Goto Y."/>
            <person name="Shimizu F."/>
            <person name="Wakebe H."/>
            <person name="Hishigaki H."/>
            <person name="Watanabe T."/>
            <person name="Sugiyama A."/>
            <person name="Takemoto M."/>
            <person name="Kawakami B."/>
            <person name="Yamazaki M."/>
            <person name="Watanabe K."/>
            <person name="Kumagai A."/>
            <person name="Itakura S."/>
            <person name="Fukuzumi Y."/>
            <person name="Fujimori Y."/>
            <person name="Komiyama M."/>
            <person name="Tashiro H."/>
            <person name="Tanigami A."/>
            <person name="Fujiwara T."/>
            <person name="Ono T."/>
            <person name="Yamada K."/>
            <person name="Fujii Y."/>
            <person name="Ozaki K."/>
            <person name="Hirao M."/>
            <person name="Ohmori Y."/>
            <person name="Kawabata A."/>
            <person name="Hikiji T."/>
            <person name="Kobatake N."/>
            <person name="Inagaki H."/>
            <person name="Ikema Y."/>
            <person name="Okamoto S."/>
            <person name="Okitani R."/>
            <person name="Kawakami T."/>
            <person name="Noguchi S."/>
            <person name="Itoh T."/>
            <person name="Shigeta K."/>
            <person name="Senba T."/>
            <person name="Matsumura K."/>
            <person name="Nakajima Y."/>
            <person name="Mizuno T."/>
            <person name="Morinaga M."/>
            <person name="Sasaki M."/>
            <person name="Togashi T."/>
            <person name="Oyama M."/>
            <person name="Hata H."/>
            <person name="Watanabe M."/>
            <person name="Komatsu T."/>
            <person name="Mizushima-Sugano J."/>
            <person name="Satoh T."/>
            <person name="Shirai Y."/>
            <person name="Takahashi Y."/>
            <person name="Nakagawa K."/>
            <person name="Okumura K."/>
            <person name="Nagase T."/>
            <person name="Nomura N."/>
            <person name="Kikuchi H."/>
            <person name="Masuho Y."/>
            <person name="Yamashita R."/>
            <person name="Nakai K."/>
            <person name="Yada T."/>
            <person name="Nakamura Y."/>
            <person name="Ohara O."/>
            <person name="Isogai T."/>
            <person name="Sugano S."/>
        </authorList>
    </citation>
    <scope>NUCLEOTIDE SEQUENCE [LARGE SCALE MRNA] (ISOFORM 7)</scope>
    <source>
        <tissue>Uterus</tissue>
    </source>
</reference>
<reference evidence="14 16" key="5">
    <citation type="submission" date="2006-12" db="EMBL/GenBank/DDBJ databases">
        <authorList>
            <consortium name="NHLBI resequencing and genotyping service (RS&amp;G)"/>
        </authorList>
    </citation>
    <scope>NUCLEOTIDE SEQUENCE [GENOMIC DNA]</scope>
</reference>
<reference key="6">
    <citation type="journal article" date="2004" name="Nature">
        <title>The DNA sequence and comparative analysis of human chromosome 10.</title>
        <authorList>
            <person name="Deloukas P."/>
            <person name="Earthrowl M.E."/>
            <person name="Grafham D.V."/>
            <person name="Rubenfield M."/>
            <person name="French L."/>
            <person name="Steward C.A."/>
            <person name="Sims S.K."/>
            <person name="Jones M.C."/>
            <person name="Searle S."/>
            <person name="Scott C."/>
            <person name="Howe K."/>
            <person name="Hunt S.E."/>
            <person name="Andrews T.D."/>
            <person name="Gilbert J.G.R."/>
            <person name="Swarbreck D."/>
            <person name="Ashurst J.L."/>
            <person name="Taylor A."/>
            <person name="Battles J."/>
            <person name="Bird C.P."/>
            <person name="Ainscough R."/>
            <person name="Almeida J.P."/>
            <person name="Ashwell R.I.S."/>
            <person name="Ambrose K.D."/>
            <person name="Babbage A.K."/>
            <person name="Bagguley C.L."/>
            <person name="Bailey J."/>
            <person name="Banerjee R."/>
            <person name="Bates K."/>
            <person name="Beasley H."/>
            <person name="Bray-Allen S."/>
            <person name="Brown A.J."/>
            <person name="Brown J.Y."/>
            <person name="Burford D.C."/>
            <person name="Burrill W."/>
            <person name="Burton J."/>
            <person name="Cahill P."/>
            <person name="Camire D."/>
            <person name="Carter N.P."/>
            <person name="Chapman J.C."/>
            <person name="Clark S.Y."/>
            <person name="Clarke G."/>
            <person name="Clee C.M."/>
            <person name="Clegg S."/>
            <person name="Corby N."/>
            <person name="Coulson A."/>
            <person name="Dhami P."/>
            <person name="Dutta I."/>
            <person name="Dunn M."/>
            <person name="Faulkner L."/>
            <person name="Frankish A."/>
            <person name="Frankland J.A."/>
            <person name="Garner P."/>
            <person name="Garnett J."/>
            <person name="Gribble S."/>
            <person name="Griffiths C."/>
            <person name="Grocock R."/>
            <person name="Gustafson E."/>
            <person name="Hammond S."/>
            <person name="Harley J.L."/>
            <person name="Hart E."/>
            <person name="Heath P.D."/>
            <person name="Ho T.P."/>
            <person name="Hopkins B."/>
            <person name="Horne J."/>
            <person name="Howden P.J."/>
            <person name="Huckle E."/>
            <person name="Hynds C."/>
            <person name="Johnson C."/>
            <person name="Johnson D."/>
            <person name="Kana A."/>
            <person name="Kay M."/>
            <person name="Kimberley A.M."/>
            <person name="Kershaw J.K."/>
            <person name="Kokkinaki M."/>
            <person name="Laird G.K."/>
            <person name="Lawlor S."/>
            <person name="Lee H.M."/>
            <person name="Leongamornlert D.A."/>
            <person name="Laird G."/>
            <person name="Lloyd C."/>
            <person name="Lloyd D.M."/>
            <person name="Loveland J."/>
            <person name="Lovell J."/>
            <person name="McLaren S."/>
            <person name="McLay K.E."/>
            <person name="McMurray A."/>
            <person name="Mashreghi-Mohammadi M."/>
            <person name="Matthews L."/>
            <person name="Milne S."/>
            <person name="Nickerson T."/>
            <person name="Nguyen M."/>
            <person name="Overton-Larty E."/>
            <person name="Palmer S.A."/>
            <person name="Pearce A.V."/>
            <person name="Peck A.I."/>
            <person name="Pelan S."/>
            <person name="Phillimore B."/>
            <person name="Porter K."/>
            <person name="Rice C.M."/>
            <person name="Rogosin A."/>
            <person name="Ross M.T."/>
            <person name="Sarafidou T."/>
            <person name="Sehra H.K."/>
            <person name="Shownkeen R."/>
            <person name="Skuce C.D."/>
            <person name="Smith M."/>
            <person name="Standring L."/>
            <person name="Sycamore N."/>
            <person name="Tester J."/>
            <person name="Thorpe A."/>
            <person name="Torcasso W."/>
            <person name="Tracey A."/>
            <person name="Tromans A."/>
            <person name="Tsolas J."/>
            <person name="Wall M."/>
            <person name="Walsh J."/>
            <person name="Wang H."/>
            <person name="Weinstock K."/>
            <person name="West A.P."/>
            <person name="Willey D.L."/>
            <person name="Whitehead S.L."/>
            <person name="Wilming L."/>
            <person name="Wray P.W."/>
            <person name="Young L."/>
            <person name="Chen Y."/>
            <person name="Lovering R.C."/>
            <person name="Moschonas N.K."/>
            <person name="Siebert R."/>
            <person name="Fechtel K."/>
            <person name="Bentley D."/>
            <person name="Durbin R.M."/>
            <person name="Hubbard T."/>
            <person name="Doucette-Stamm L."/>
            <person name="Beck S."/>
            <person name="Smith D.R."/>
            <person name="Rogers J."/>
        </authorList>
    </citation>
    <scope>NUCLEOTIDE SEQUENCE [LARGE SCALE GENOMIC DNA]</scope>
</reference>
<reference evidence="14 15" key="7">
    <citation type="journal article" date="2004" name="Genome Res.">
        <title>The status, quality, and expansion of the NIH full-length cDNA project: the Mammalian Gene Collection (MGC).</title>
        <authorList>
            <consortium name="The MGC Project Team"/>
        </authorList>
    </citation>
    <scope>NUCLEOTIDE SEQUENCE [LARGE SCALE MRNA] (ISOFORM 6)</scope>
    <source>
        <tissue evidence="15">Skeletal muscle</tissue>
    </source>
</reference>
<reference evidence="14" key="8">
    <citation type="journal article" date="2002" name="J. Biol. Chem.">
        <title>Calsarcin-3, a novel skeletal muscle-specific member of the calsarcin family, interacts with multiple Z-disc proteins.</title>
        <authorList>
            <person name="Frey N."/>
            <person name="Olson E.N."/>
        </authorList>
    </citation>
    <scope>INTERACTION WITH MYOZ1; MYOZ2 AND MYOZ3</scope>
</reference>
<reference evidence="14" key="9">
    <citation type="journal article" date="2004" name="Structure">
        <title>Solution structure of ZASP PDZ domain; implications for sarcomere ultrastructure and enigma family redundancy.</title>
        <authorList>
            <person name="Au Y."/>
            <person name="Atkinson R.A."/>
            <person name="Guerrini R."/>
            <person name="Kelly G."/>
            <person name="Joseph C."/>
            <person name="Martin S.R."/>
            <person name="Muskett F.W."/>
            <person name="Pallavicini A."/>
            <person name="Faulkner G."/>
            <person name="Pastore A."/>
        </authorList>
    </citation>
    <scope>STRUCTURE BY NMR OF 3-85</scope>
</reference>
<reference evidence="14" key="10">
    <citation type="journal article" date="2003" name="J. Am. Coll. Cardiol.">
        <title>Mutations in Cypher/ZASP in patients with dilated cardiomyopathy and left ventricular non-compaction.</title>
        <authorList>
            <person name="Vatta M."/>
            <person name="Mohapatra B."/>
            <person name="Jimenez S."/>
            <person name="Sanchez X."/>
            <person name="Faulkner G."/>
            <person name="Perles Z."/>
            <person name="Sinagra G."/>
            <person name="Lin J.-H."/>
            <person name="Vu T.M."/>
            <person name="Zhou Q."/>
            <person name="Bowles K.R."/>
            <person name="Di Lenarda A."/>
            <person name="Schimmenti L."/>
            <person name="Fox M."/>
            <person name="Chrisco M.A."/>
            <person name="Murphy R.T."/>
            <person name="McKenna W."/>
            <person name="Elliott P."/>
            <person name="Bowles N.E."/>
            <person name="Chen J."/>
            <person name="Valle G."/>
            <person name="Towbin J.A."/>
        </authorList>
    </citation>
    <scope>VARIANTS CMD1C LEU-189; ILE-206 AND MET-345</scope>
    <scope>VARIANTS CMD1C ASN-117 AND MET-136 (ISOFORMS 2 AND 4)</scope>
</reference>
<reference evidence="14" key="11">
    <citation type="journal article" date="2004" name="J. Biol. Chem.">
        <title>A Cypher/ZASP mutation associated with dilated cardiomyopathy alters the binding affinity to protein kinase C.</title>
        <authorList>
            <person name="Arimura T."/>
            <person name="Hayashi T."/>
            <person name="Terada H."/>
            <person name="Lee S.-Y."/>
            <person name="Zhou Q."/>
            <person name="Takahashi M."/>
            <person name="Ueda K."/>
            <person name="Nouchi T."/>
            <person name="Hohda S."/>
            <person name="Shibutani M."/>
            <person name="Hirose M."/>
            <person name="Chen J."/>
            <person name="Park J.-E."/>
            <person name="Yasunami M."/>
            <person name="Hayashi H."/>
            <person name="Kimura A."/>
        </authorList>
    </citation>
    <scope>VARIANT CMD1C ASN-673</scope>
    <scope>VARIANTS ILE-55 AND ILE-635</scope>
</reference>
<reference evidence="14" key="12">
    <citation type="journal article" date="2005" name="Ann. Neurol.">
        <title>Mutations in ZASP define a novel form of muscular dystrophy in humans.</title>
        <authorList>
            <person name="Selcen D."/>
            <person name="Engel A.G."/>
        </authorList>
    </citation>
    <scope>VARIANTS MYOPATHY</scope>
</reference>
<reference key="13">
    <citation type="journal article" date="2014" name="Orphanet J. Rare Dis.">
        <title>Unusual multisystemic involvement and a novel BAG3 mutation revealed by NGS screening in a large cohort of myofibrillar myopathies.</title>
        <authorList>
            <person name="Semmler A.L."/>
            <person name="Sacconi S."/>
            <person name="Bach J.E."/>
            <person name="Liebe C."/>
            <person name="Buermann J."/>
            <person name="Kley R.A."/>
            <person name="Ferbert A."/>
            <person name="Anderheiden R."/>
            <person name="Van den Bergh P."/>
            <person name="Martin J.J."/>
            <person name="De Jonghe P."/>
            <person name="Neuen-Jacob E."/>
            <person name="Mueller O."/>
            <person name="Deschauer M."/>
            <person name="Bergmann M."/>
            <person name="Schroeder J.M."/>
            <person name="Vorgerd M."/>
            <person name="Schulz J.B."/>
            <person name="Weis J."/>
            <person name="Kress W."/>
            <person name="Claeys K.G."/>
        </authorList>
    </citation>
    <scope>VARIANT MFM4 VAL-165 (ISOFORM 6)</scope>
    <scope>INVOLVEMENT IN MFM4</scope>
</reference>
<accession>O75112</accession>
<accession>A2TDB7</accession>
<accession>A6NIV4</accession>
<accession>B4E3K3</accession>
<accession>Q5K6N9</accession>
<accession>Q5K6P0</accession>
<accession>Q5K6P1</accession>
<accession>Q96FH2</accession>
<accession>Q9Y4Z3</accession>
<accession>Q9Y4Z4</accession>
<accession>Q9Y4Z5</accession>
<keyword id="KW-0002">3D-structure</keyword>
<keyword id="KW-0025">Alternative splicing</keyword>
<keyword id="KW-0122">Cardiomyopathy</keyword>
<keyword id="KW-0966">Cell projection</keyword>
<keyword id="KW-0963">Cytoplasm</keyword>
<keyword id="KW-0206">Cytoskeleton</keyword>
<keyword id="KW-0225">Disease variant</keyword>
<keyword id="KW-0440">LIM domain</keyword>
<keyword id="KW-0479">Metal-binding</keyword>
<keyword id="KW-0488">Methylation</keyword>
<keyword id="KW-1060">Myofibrillar myopathy</keyword>
<keyword id="KW-0597">Phosphoprotein</keyword>
<keyword id="KW-1267">Proteomics identification</keyword>
<keyword id="KW-1185">Reference proteome</keyword>
<keyword id="KW-0677">Repeat</keyword>
<keyword id="KW-0862">Zinc</keyword>
<sequence>MSYSVTLTGPGPWGFRLQGGKDFNMPLTISRITPGSKAAQSQLSQGDLVVAIDGVNTDTMTHLEAQNKIKSASYNLSLTLQKSKRPIPISTTAPPVQTPLPVIPHQKDPALDTNGSLVAPSPSPEARASPGTPGTPELRPTFSPAFSRPSAFSSLAEASDPGPPRASLRAKTSPEGARDLLGPKALPGSSQPRQYNNPIGLYSAETLREMAQMYQMSLRGKASGVGLPGGSLPIKDLAVDSASPVYQAVIKSQNKPEDEADEWARRSSNLQSRSFRILAQMTGTEFMQDPDEEALRRSSTPIEHAPVCTSQATTPLLPASAQPPAAASPSAASPPLATAAAHTAIASASTTAPASSPADSPRPQASSYSPAVAASSAPATHTSYSEGPAAPAPKPRVVTTASIRPSVYQPVPASTYSPSPGANYSPTPYTPSPAPAYTPSPAPAYTPSPVPTYTPSPAPAYTPSPAPNYNPAPSVAYSGGPAEPASRPPWVTDDSFSQKFAPGKSTTSISKQTLPRGGPAYTPAGPQVPPLARGTVQRAERFPASSRTPLCGHCNNVIRGPFLVAMGRSWHPEEFTCAYCKTSLADVCFVEEQNNVYCERCYEQFFAPLCAKCNTKIMGEVMHALRQTWHTTCFVCAACKKPFGNSLFHMEDGEPYCEKDYINLFSTKCHGCDFPVEAGDKFIEALGHTWHDTCFICAVCHVNLEGQPFYSKKDRPLCKKHAHTINL</sequence>
<comment type="function">
    <text evidence="14">May function as an adapter in striated muscle to couple protein kinase C-mediated signaling via its LIM domains to the cytoskeleton.</text>
</comment>
<comment type="subunit">
    <text evidence="1 5 6">Interacts via its LIM domains with various PKC isoforms (By similarity). Interacts via its PDZ domain with the ACTN2 C-terminal region. Interacts with MYOZ1, MYOZ2 and MYOZ3.</text>
</comment>
<comment type="subcellular location">
    <subcellularLocation>
        <location evidence="5">Cytoplasm</location>
        <location evidence="5">Perinuclear region</location>
    </subcellularLocation>
    <subcellularLocation>
        <location evidence="5">Cell projection</location>
        <location evidence="5">Pseudopodium</location>
    </subcellularLocation>
    <subcellularLocation>
        <location evidence="5">Cytoplasm</location>
        <location evidence="5">Cytoskeleton</location>
    </subcellularLocation>
    <subcellularLocation>
        <location evidence="5">Cytoplasm</location>
        <location evidence="5">Myofibril</location>
        <location evidence="5">Sarcomere</location>
        <location evidence="5">Z line</location>
    </subcellularLocation>
    <text>Localized to the cytoplasm around nuclei and pseudopodia of undifferentiated cells and detected throughout the myotubes of differentiated cells. Colocalizes with ACTN2 at the Z-lines.</text>
</comment>
<comment type="alternative products">
    <event type="alternative splicing"/>
    <isoform>
        <id>O75112-1</id>
        <name evidence="14">1</name>
        <sequence type="displayed"/>
    </isoform>
    <isoform>
        <id>O75112-2</id>
        <name evidence="5">2</name>
        <sequence type="described" ref="VSP_051898 VSP_051900"/>
    </isoform>
    <isoform>
        <id>O75112-3</id>
        <name evidence="5">3</name>
        <sequence type="described" ref="VSP_051897"/>
    </isoform>
    <isoform>
        <id>O75112-4</id>
        <name evidence="5">4</name>
        <sequence type="described" ref="VSP_051899 VSP_051901 VSP_051902"/>
    </isoform>
    <isoform>
        <id>O75112-5</id>
        <name evidence="5">5</name>
        <sequence type="described" ref="VSP_051901 VSP_051902"/>
    </isoform>
    <isoform>
        <id>O75112-6</id>
        <name evidence="5">6</name>
        <sequence type="described" ref="VSP_051898 VSP_051901 VSP_051902"/>
    </isoform>
    <isoform>
        <id>O75112-7</id>
        <name>7</name>
        <sequence type="described" ref="VSP_051899 VSP_051900"/>
    </isoform>
</comment>
<comment type="tissue specificity">
    <text evidence="5">Expressed primarily in skeletal muscle and to a lesser extent in heart. Also detected in brain and placenta.</text>
</comment>
<comment type="disease" evidence="7 8">
    <disease id="DI-00212">
        <name>Cardiomyopathy, dilated, 1C, with or without left ventricular non-compaction</name>
        <acronym>CMD1C</acronym>
        <description>A disorder characterized by ventricular dilation and impaired systolic function, resulting in congestive heart failure and arrhythmia. Patients are at risk of premature death. Cardiomyopathy dilated type 1C is associated with left ventricular non-compaction in some patients. Left ventricular non-compaction is characterized by numerous prominent trabeculations and deep intertrabecular recesses in hypertrophied and hypokinetic segments of the left ventricle.</description>
        <dbReference type="MIM" id="601493"/>
    </disease>
    <text>The disease is caused by variants affecting the gene represented in this entry.</text>
</comment>
<comment type="disease">
    <disease id="DI-01489">
        <name>Left ventricular non-compaction 3</name>
        <acronym>LVNC3</acronym>
        <description>A form of left ventricular non-compaction, a cardiomyopathy due to myocardial morphogenesis arrest and characterized by a hypertrophic left ventricle, a severely thickened 2-layered myocardium, numerous prominent trabeculations, deep intertrabecular recesses, and poor systolic function. Clinical manifestations are variable. Some affected individuals experience no symptoms at all, others develop heart failure. In some cases, left ventricular non-compaction is associated with other congenital heart anomalies. LVNC3 is an autosomal dominant condition.</description>
        <dbReference type="MIM" id="601493"/>
    </disease>
    <text>The disease is caused by variants affecting the gene represented in this entry.</text>
</comment>
<comment type="disease" evidence="9">
    <disease id="DI-02467">
        <name>Myopathy, myofibrillar, 4</name>
        <acronym>MFM4</acronym>
        <description>A form of myofibrillar myopathy, a group of chronic neuromuscular disorders characterized at ultrastructural level by disintegration of the sarcomeric Z disk and myofibrils, and replacement of the normal myofibrillar markings by small dense granules, or larger hyaline masses, or amorphous material. MFM4 is characterized by distal and proximal muscle weakness with signs of cardiomyopathy and neuropathy.</description>
        <dbReference type="MIM" id="609452"/>
    </disease>
    <text>The disease is caused by variants affecting the gene represented in this entry.</text>
</comment>
<comment type="sequence caution" evidence="14">
    <conflict type="erroneous initiation">
        <sequence resource="EMBL-CDS" id="BAA31588"/>
    </conflict>
</comment>
<comment type="sequence caution" evidence="14">
    <molecule>Isoform 6</molecule>
    <conflict type="frameshift">
        <sequence resource="EMBL-CDS" id="AAQ14317"/>
    </conflict>
</comment>
<comment type="sequence caution" evidence="14">
    <molecule>Isoform 6</molecule>
    <conflict type="frameshift">
        <sequence resource="EMBL-CDS" id="CAB46727"/>
    </conflict>
</comment>
<organism>
    <name type="scientific">Homo sapiens</name>
    <name type="common">Human</name>
    <dbReference type="NCBI Taxonomy" id="9606"/>
    <lineage>
        <taxon>Eukaryota</taxon>
        <taxon>Metazoa</taxon>
        <taxon>Chordata</taxon>
        <taxon>Craniata</taxon>
        <taxon>Vertebrata</taxon>
        <taxon>Euteleostomi</taxon>
        <taxon>Mammalia</taxon>
        <taxon>Eutheria</taxon>
        <taxon>Euarchontoglires</taxon>
        <taxon>Primates</taxon>
        <taxon>Haplorrhini</taxon>
        <taxon>Catarrhini</taxon>
        <taxon>Hominidae</taxon>
        <taxon>Homo</taxon>
    </lineage>
</organism>
<name>LDB3_HUMAN</name>
<gene>
    <name evidence="19" type="primary">LDB3</name>
    <name evidence="17" type="synonym">KIAA0613</name>
    <name evidence="18" type="synonym">ZASP</name>
</gene>
<feature type="chain" id="PRO_0000075767" description="LIM domain-binding protein 3">
    <location>
        <begin position="1"/>
        <end position="727"/>
    </location>
</feature>
<feature type="domain" description="PDZ" evidence="3">
    <location>
        <begin position="1"/>
        <end position="84"/>
    </location>
</feature>
<feature type="domain" description="LIM zinc-binding 1" evidence="2">
    <location>
        <begin position="549"/>
        <end position="607"/>
    </location>
</feature>
<feature type="domain" description="LIM zinc-binding 2" evidence="2">
    <location>
        <begin position="608"/>
        <end position="667"/>
    </location>
</feature>
<feature type="domain" description="LIM zinc-binding 3" evidence="2">
    <location>
        <begin position="668"/>
        <end position="727"/>
    </location>
</feature>
<feature type="region of interest" description="Disordered" evidence="4">
    <location>
        <begin position="86"/>
        <end position="197"/>
    </location>
</feature>
<feature type="region of interest" description="Disordered" evidence="4">
    <location>
        <begin position="284"/>
        <end position="440"/>
    </location>
</feature>
<feature type="region of interest" description="Disordered" evidence="4">
    <location>
        <begin position="472"/>
        <end position="529"/>
    </location>
</feature>
<feature type="compositionally biased region" description="Low complexity" evidence="4">
    <location>
        <begin position="140"/>
        <end position="156"/>
    </location>
</feature>
<feature type="compositionally biased region" description="Polar residues" evidence="4">
    <location>
        <begin position="188"/>
        <end position="197"/>
    </location>
</feature>
<feature type="compositionally biased region" description="Low complexity" evidence="4">
    <location>
        <begin position="312"/>
        <end position="385"/>
    </location>
</feature>
<feature type="compositionally biased region" description="Pro residues" evidence="4">
    <location>
        <begin position="428"/>
        <end position="440"/>
    </location>
</feature>
<feature type="compositionally biased region" description="Polar residues" evidence="4">
    <location>
        <begin position="494"/>
        <end position="513"/>
    </location>
</feature>
<feature type="modified residue" description="Phosphoserine" evidence="1">
    <location>
        <position position="44"/>
    </location>
</feature>
<feature type="modified residue" description="Phosphoserine" evidence="1">
    <location>
        <position position="121"/>
    </location>
</feature>
<feature type="modified residue" description="Phosphoserine" evidence="1">
    <location>
        <position position="123"/>
    </location>
</feature>
<feature type="modified residue" description="Phosphoserine" evidence="1">
    <location>
        <position position="217"/>
    </location>
</feature>
<feature type="modified residue" description="Omega-N-methylarginine" evidence="1">
    <location>
        <position position="219"/>
    </location>
</feature>
<feature type="modified residue" description="Phosphoserine" evidence="1">
    <location>
        <position position="223"/>
    </location>
</feature>
<feature type="modified residue" description="Omega-N-methylarginine" evidence="1">
    <location>
        <position position="516"/>
    </location>
</feature>
<feature type="modified residue" description="Omega-N-methylarginine" evidence="1">
    <location>
        <position position="533"/>
    </location>
</feature>
<feature type="splice variant" id="VSP_051897" description="In isoform 3." evidence="10">
    <location>
        <begin position="108"/>
        <end position="364"/>
    </location>
</feature>
<feature type="splice variant" id="VSP_051898" description="In isoform 2 and isoform 6." evidence="10 12 13">
    <original>DPALDTNGSLVAPSPSPEARASPGTPGTPELRPTFSPAFSRPSAFSSLAEASDPGPPRASLRAKTSPEGARDLLGPKALPGSSQPRQYNNPIGLYSAETLREMAQMYQMSLRGKASGVGLPG</original>
    <variation>VVVNSPANADYQERFNPSALKDSALSTHKPIEVKGLGGKATIIHAQYNTPISMYSQDAIMDAIAGQAQAQGSDFS</variation>
    <location>
        <begin position="108"/>
        <end position="229"/>
    </location>
</feature>
<feature type="splice variant" id="VSP_051899" description="In isoform 4 and isoform 7." evidence="11 13">
    <original>G</original>
    <variation>GADYQERFNPSALKDSALSTHKPIEVKGLGGKATIIHAQYNTPISMYSQDAIMDAIAGQAQAQGSDFSG</variation>
    <location>
        <position position="230"/>
    </location>
</feature>
<feature type="splice variant" id="VSP_051900" description="In isoform 2 and isoform 7." evidence="10 11">
    <location>
        <begin position="299"/>
        <end position="361"/>
    </location>
</feature>
<feature type="splice variant" id="VSP_051901" description="In isoform 4, isoform 5 and isoform 6." evidence="10 12 13">
    <original>STPIEHAPVCTSQATTPLLPASAQPPAAASP</original>
    <variation>RERFETERNSPRFAKLRNWHHGLSAQILNVK</variation>
    <location>
        <begin position="299"/>
        <end position="329"/>
    </location>
</feature>
<feature type="splice variant" id="VSP_051902" description="In isoform 4, isoform 5 and isoform 6." evidence="10 12 13">
    <location>
        <begin position="331"/>
        <end position="727"/>
    </location>
</feature>
<feature type="sequence variant" id="VAR_024008" description="In dbSNP:rs3740343." evidence="7">
    <original>V</original>
    <variation>I</variation>
    <location>
        <position position="55"/>
    </location>
</feature>
<feature type="sequence variant" id="VAR_050146" description="In dbSNP:rs45592139.">
    <original>P</original>
    <variation>L</variation>
    <location>
        <position position="101"/>
    </location>
</feature>
<feature type="sequence variant" id="VAR_024009" description="In CMD1C; dbSNP:rs45487699." evidence="8">
    <original>S</original>
    <variation>L</variation>
    <location>
        <position position="189"/>
    </location>
</feature>
<feature type="sequence variant" id="VAR_024010" description="In CMD1C; dbSNP:rs121908337." evidence="8">
    <original>T</original>
    <variation>I</variation>
    <location>
        <position position="206"/>
    </location>
</feature>
<feature type="sequence variant" id="VAR_024011" description="In CMD1C; dbSNP:rs121908336." evidence="8">
    <original>I</original>
    <variation>M</variation>
    <location>
        <position position="345"/>
    </location>
</feature>
<feature type="sequence variant" id="VAR_024012" description="In dbSNP:rs45618633." evidence="7">
    <original>V</original>
    <variation>I</variation>
    <location>
        <position position="635"/>
    </location>
</feature>
<feature type="sequence variant" id="VAR_024013" description="In CMD1C; dbSNP:rs45514002." evidence="7">
    <original>D</original>
    <variation>N</variation>
    <location>
        <position position="673"/>
    </location>
</feature>
<feature type="sequence conflict" description="In Ref. 1; CAB46729." evidence="14" ref="1">
    <original>ASSY</original>
    <variation>VVVN</variation>
    <location>
        <begin position="365"/>
        <end position="368"/>
    </location>
</feature>
<feature type="sequence conflict" description="In Ref. 1; CAB46729." evidence="14" ref="1">
    <original>V</original>
    <variation>N</variation>
    <location>
        <position position="372"/>
    </location>
</feature>
<feature type="strand" evidence="20">
    <location>
        <begin position="2"/>
        <end position="7"/>
    </location>
</feature>
<feature type="strand" evidence="20">
    <location>
        <begin position="9"/>
        <end position="11"/>
    </location>
</feature>
<feature type="strand" evidence="20">
    <location>
        <begin position="14"/>
        <end position="20"/>
    </location>
</feature>
<feature type="helix" evidence="20">
    <location>
        <begin position="21"/>
        <end position="23"/>
    </location>
</feature>
<feature type="strand" evidence="20">
    <location>
        <begin position="25"/>
        <end position="32"/>
    </location>
</feature>
<feature type="helix" evidence="20">
    <location>
        <begin position="37"/>
        <end position="40"/>
    </location>
</feature>
<feature type="strand" evidence="20">
    <location>
        <begin position="48"/>
        <end position="52"/>
    </location>
</feature>
<feature type="helix" evidence="20">
    <location>
        <begin position="62"/>
        <end position="70"/>
    </location>
</feature>
<feature type="strand" evidence="20">
    <location>
        <begin position="73"/>
        <end position="81"/>
    </location>
</feature>
<feature type="sequence variant" id="VAR_082846" description="In CMD1C; uncertain significance; dbSNP:rs121908338." evidence="8">
    <original>D</original>
    <variation>N</variation>
    <location sequence="O75112-2">
        <position position="117"/>
    </location>
</feature>
<feature type="sequence variant" id="VAR_082847" description="In CMD1C; uncertain significance; dbSNP:rs2132397012." evidence="8">
    <original>K</original>
    <variation>M</variation>
    <location sequence="O75112-2">
        <position position="136"/>
    </location>
</feature>
<feature type="sequence variant" id="VAR_082848" description="In MFM4; dbSNP:rs121908333." evidence="14">
    <original>A</original>
    <variation>T</variation>
    <location sequence="O75112-2">
        <position position="147"/>
    </location>
</feature>
<feature type="sequence variant" id="VAR_082849" description="In MFM4; dbSNP:rs121908334." evidence="14">
    <original>A</original>
    <variation>V</variation>
    <location sequence="O75112-2">
        <position position="165"/>
    </location>
</feature>
<feature type="sequence variant" id="VAR_082850" description="In CMD1C; uncertain significance; dbSNP:rs121908338." evidence="14">
    <original>D</original>
    <variation>N</variation>
    <location sequence="O75112-4">
        <position position="232"/>
    </location>
</feature>
<feature type="sequence variant" id="VAR_082851" description="In CMD1C; uncertain significance; dbSNP:rs2132397012." evidence="14">
    <original>K</original>
    <variation>M</variation>
    <location sequence="O75112-4">
        <position position="251"/>
    </location>
</feature>
<feature type="sequence variant" id="VAR_082852" description="In MFM4; dbSNP:rs121908333." evidence="14">
    <original>A</original>
    <variation>T</variation>
    <location sequence="O75112-4">
        <position position="262"/>
    </location>
</feature>
<feature type="sequence variant" id="VAR_082853" description="In MFM4; dbSNP:rs121908334." evidence="14">
    <original>A</original>
    <variation>V</variation>
    <location sequence="O75112-4">
        <position position="280"/>
    </location>
</feature>
<feature type="sequence variant" id="VAR_082854" description="In MFM4; dbSNP:rs121908335." evidence="14">
    <original>R</original>
    <variation>C</variation>
    <location sequence="O75112-4">
        <position position="383"/>
    </location>
</feature>
<feature type="sequence variant" id="VAR_082855" description="In MFM-ZASP; dbSNP:rs121908335." evidence="14">
    <original>R</original>
    <variation>C</variation>
    <location sequence="O75112-5">
        <position position="315"/>
    </location>
</feature>
<feature type="sequence variant" id="VAR_082856" description="In MFM4; dbSNP:rs121908333." evidence="14">
    <original>A</original>
    <variation>T</variation>
    <location sequence="O75112-6">
        <position position="147"/>
    </location>
</feature>
<feature type="sequence variant" id="VAR_082857" description="In MFM4; dbSNP:rs121908334." evidence="9">
    <original>A</original>
    <variation>V</variation>
    <location sequence="O75112-6">
        <position position="165"/>
    </location>
</feature>
<feature type="sequence variant" id="VAR_082858" description="In MFM4; dbSNP:rs121908335." evidence="14">
    <original>R</original>
    <variation>C</variation>
    <location sequence="O75112-6">
        <position position="268"/>
    </location>
</feature>
<proteinExistence type="evidence at protein level"/>
<evidence type="ECO:0000250" key="1">
    <source>
        <dbReference type="UniProtKB" id="Q9JKS4"/>
    </source>
</evidence>
<evidence type="ECO:0000255" key="2">
    <source>
        <dbReference type="PROSITE-ProRule" id="PRU00125"/>
    </source>
</evidence>
<evidence type="ECO:0000255" key="3">
    <source>
        <dbReference type="PROSITE-ProRule" id="PRU00143"/>
    </source>
</evidence>
<evidence type="ECO:0000256" key="4">
    <source>
        <dbReference type="SAM" id="MobiDB-lite"/>
    </source>
</evidence>
<evidence type="ECO:0000269" key="5">
    <source>
    </source>
</evidence>
<evidence type="ECO:0000269" key="6">
    <source>
    </source>
</evidence>
<evidence type="ECO:0000269" key="7">
    <source>
    </source>
</evidence>
<evidence type="ECO:0000269" key="8">
    <source>
    </source>
</evidence>
<evidence type="ECO:0000269" key="9">
    <source>
    </source>
</evidence>
<evidence type="ECO:0000303" key="10">
    <source>
    </source>
</evidence>
<evidence type="ECO:0000303" key="11">
    <source>
    </source>
</evidence>
<evidence type="ECO:0000303" key="12">
    <source>
    </source>
</evidence>
<evidence type="ECO:0000303" key="13">
    <source ref="2"/>
</evidence>
<evidence type="ECO:0000305" key="14"/>
<evidence type="ECO:0000312" key="15">
    <source>
        <dbReference type="EMBL" id="AAH10929.1"/>
    </source>
</evidence>
<evidence type="ECO:0000312" key="16">
    <source>
        <dbReference type="EMBL" id="AAQ14318.1"/>
    </source>
</evidence>
<evidence type="ECO:0000312" key="17">
    <source>
        <dbReference type="EMBL" id="BAA31588.1"/>
    </source>
</evidence>
<evidence type="ECO:0000312" key="18">
    <source>
        <dbReference type="EMBL" id="CAB46728.1"/>
    </source>
</evidence>
<evidence type="ECO:0000312" key="19">
    <source>
        <dbReference type="HGNC" id="HGNC:15710"/>
    </source>
</evidence>
<evidence type="ECO:0007829" key="20">
    <source>
        <dbReference type="PDB" id="4YDP"/>
    </source>
</evidence>